<sequence>GSSGLISFPRN</sequence>
<evidence type="ECO:0000255" key="1"/>
<evidence type="ECO:0000269" key="2">
    <source>
    </source>
</evidence>
<evidence type="ECO:0000303" key="3">
    <source>
    </source>
</evidence>
<evidence type="ECO:0000305" key="4"/>
<comment type="function">
    <text evidence="4">Mediates visceral muscle contractile activity (myotropic activity).</text>
</comment>
<comment type="subcellular location">
    <subcellularLocation>
        <location evidence="4">Secreted</location>
    </subcellularLocation>
</comment>
<comment type="similarity">
    <text evidence="1">Belongs to the periviscerokinin family.</text>
</comment>
<keyword id="KW-0027">Amidation</keyword>
<keyword id="KW-0903">Direct protein sequencing</keyword>
<keyword id="KW-0527">Neuropeptide</keyword>
<keyword id="KW-0964">Secreted</keyword>
<feature type="peptide" id="PRO_0000378772" description="Periviscerokinin-1" evidence="2">
    <location>
        <begin position="1"/>
        <end position="11"/>
    </location>
</feature>
<feature type="modified residue" description="Asparagine amide" evidence="2">
    <location>
        <position position="11"/>
    </location>
</feature>
<reference evidence="4" key="1">
    <citation type="journal article" date="2009" name="BMC Evol. Biol.">
        <title>A proteomic approach for studying insect phylogeny: CAPA peptides of ancient insect taxa (Dictyoptera, Blattoptera) as a test case.</title>
        <authorList>
            <person name="Roth S."/>
            <person name="Fromm B."/>
            <person name="Gaede G."/>
            <person name="Predel R."/>
        </authorList>
    </citation>
    <scope>PROTEIN SEQUENCE</scope>
    <scope>AMIDATION AT ASN-11</scope>
    <source>
        <tissue evidence="2">Abdominal perisympathetic organs</tissue>
    </source>
</reference>
<protein>
    <recommendedName>
        <fullName evidence="3">Periviscerokinin-1</fullName>
        <shortName evidence="3">ThePe-PVK-1</shortName>
    </recommendedName>
</protein>
<accession>P85787</accession>
<proteinExistence type="evidence at protein level"/>
<name>PVK1_THEPT</name>
<dbReference type="GO" id="GO:0005576">
    <property type="term" value="C:extracellular region"/>
    <property type="evidence" value="ECO:0007669"/>
    <property type="project" value="UniProtKB-SubCell"/>
</dbReference>
<dbReference type="GO" id="GO:0007218">
    <property type="term" value="P:neuropeptide signaling pathway"/>
    <property type="evidence" value="ECO:0007669"/>
    <property type="project" value="UniProtKB-KW"/>
</dbReference>
<dbReference type="InterPro" id="IPR013231">
    <property type="entry name" value="Periviscerokinin"/>
</dbReference>
<dbReference type="Pfam" id="PF08259">
    <property type="entry name" value="Periviscerokin"/>
    <property type="match status" value="1"/>
</dbReference>
<organism>
    <name type="scientific">Therea petiveriana</name>
    <name type="common">Domino cockroach</name>
    <dbReference type="NCBI Taxonomy" id="45965"/>
    <lineage>
        <taxon>Eukaryota</taxon>
        <taxon>Metazoa</taxon>
        <taxon>Ecdysozoa</taxon>
        <taxon>Arthropoda</taxon>
        <taxon>Hexapoda</taxon>
        <taxon>Insecta</taxon>
        <taxon>Pterygota</taxon>
        <taxon>Neoptera</taxon>
        <taxon>Polyneoptera</taxon>
        <taxon>Dictyoptera</taxon>
        <taxon>Blattodea</taxon>
        <taxon>Corydioidea</taxon>
        <taxon>Corydiidae</taxon>
        <taxon>Therea</taxon>
    </lineage>
</organism>